<dbReference type="EMBL" id="AM889285">
    <property type="protein sequence ID" value="CAP57342.1"/>
    <property type="molecule type" value="Genomic_DNA"/>
</dbReference>
<dbReference type="EMBL" id="CP001189">
    <property type="protein sequence ID" value="ACI52701.1"/>
    <property type="molecule type" value="Genomic_DNA"/>
</dbReference>
<dbReference type="RefSeq" id="WP_012227949.1">
    <property type="nucleotide sequence ID" value="NC_010125.1"/>
</dbReference>
<dbReference type="SMR" id="A9H3P8"/>
<dbReference type="STRING" id="272568.GDI3399"/>
<dbReference type="KEGG" id="gdi:GDI3399"/>
<dbReference type="KEGG" id="gdj:Gdia_2971"/>
<dbReference type="eggNOG" id="COG0091">
    <property type="taxonomic scope" value="Bacteria"/>
</dbReference>
<dbReference type="HOGENOM" id="CLU_083987_3_0_5"/>
<dbReference type="OrthoDB" id="9805969at2"/>
<dbReference type="Proteomes" id="UP000001176">
    <property type="component" value="Chromosome"/>
</dbReference>
<dbReference type="GO" id="GO:0022625">
    <property type="term" value="C:cytosolic large ribosomal subunit"/>
    <property type="evidence" value="ECO:0007669"/>
    <property type="project" value="TreeGrafter"/>
</dbReference>
<dbReference type="GO" id="GO:0019843">
    <property type="term" value="F:rRNA binding"/>
    <property type="evidence" value="ECO:0007669"/>
    <property type="project" value="UniProtKB-UniRule"/>
</dbReference>
<dbReference type="GO" id="GO:0003735">
    <property type="term" value="F:structural constituent of ribosome"/>
    <property type="evidence" value="ECO:0007669"/>
    <property type="project" value="InterPro"/>
</dbReference>
<dbReference type="GO" id="GO:0006412">
    <property type="term" value="P:translation"/>
    <property type="evidence" value="ECO:0007669"/>
    <property type="project" value="UniProtKB-UniRule"/>
</dbReference>
<dbReference type="CDD" id="cd00336">
    <property type="entry name" value="Ribosomal_L22"/>
    <property type="match status" value="1"/>
</dbReference>
<dbReference type="Gene3D" id="3.90.470.10">
    <property type="entry name" value="Ribosomal protein L22/L17"/>
    <property type="match status" value="1"/>
</dbReference>
<dbReference type="HAMAP" id="MF_01331_B">
    <property type="entry name" value="Ribosomal_uL22_B"/>
    <property type="match status" value="1"/>
</dbReference>
<dbReference type="InterPro" id="IPR001063">
    <property type="entry name" value="Ribosomal_uL22"/>
</dbReference>
<dbReference type="InterPro" id="IPR005727">
    <property type="entry name" value="Ribosomal_uL22_bac/chlpt-type"/>
</dbReference>
<dbReference type="InterPro" id="IPR047867">
    <property type="entry name" value="Ribosomal_uL22_bac/org-type"/>
</dbReference>
<dbReference type="InterPro" id="IPR018260">
    <property type="entry name" value="Ribosomal_uL22_CS"/>
</dbReference>
<dbReference type="InterPro" id="IPR036394">
    <property type="entry name" value="Ribosomal_uL22_sf"/>
</dbReference>
<dbReference type="NCBIfam" id="TIGR01044">
    <property type="entry name" value="rplV_bact"/>
    <property type="match status" value="1"/>
</dbReference>
<dbReference type="PANTHER" id="PTHR13501">
    <property type="entry name" value="CHLOROPLAST 50S RIBOSOMAL PROTEIN L22-RELATED"/>
    <property type="match status" value="1"/>
</dbReference>
<dbReference type="PANTHER" id="PTHR13501:SF8">
    <property type="entry name" value="LARGE RIBOSOMAL SUBUNIT PROTEIN UL22M"/>
    <property type="match status" value="1"/>
</dbReference>
<dbReference type="Pfam" id="PF00237">
    <property type="entry name" value="Ribosomal_L22"/>
    <property type="match status" value="1"/>
</dbReference>
<dbReference type="SUPFAM" id="SSF54843">
    <property type="entry name" value="Ribosomal protein L22"/>
    <property type="match status" value="1"/>
</dbReference>
<dbReference type="PROSITE" id="PS00464">
    <property type="entry name" value="RIBOSOMAL_L22"/>
    <property type="match status" value="1"/>
</dbReference>
<accession>A9H3P8</accession>
<accession>B5ZIG8</accession>
<evidence type="ECO:0000255" key="1">
    <source>
        <dbReference type="HAMAP-Rule" id="MF_01331"/>
    </source>
</evidence>
<evidence type="ECO:0000305" key="2"/>
<feature type="chain" id="PRO_1000086557" description="Large ribosomal subunit protein uL22">
    <location>
        <begin position="1"/>
        <end position="134"/>
    </location>
</feature>
<name>RL22_GLUDA</name>
<sequence>MSKPKHPRTLAETEAQALTRNIRVSPRKLNLVAGLIRNKPASQAVAILTFSKRRIAQDVRKTLESAIANAENNHQLDVDQLVVVRAEVGKSIVMRRFHARGRGRSSRIEKFFSHLKIVVAERAAEAETTEQKAA</sequence>
<proteinExistence type="inferred from homology"/>
<comment type="function">
    <text evidence="1">This protein binds specifically to 23S rRNA; its binding is stimulated by other ribosomal proteins, e.g. L4, L17, and L20. It is important during the early stages of 50S assembly. It makes multiple contacts with different domains of the 23S rRNA in the assembled 50S subunit and ribosome (By similarity).</text>
</comment>
<comment type="function">
    <text evidence="1">The globular domain of the protein is located near the polypeptide exit tunnel on the outside of the subunit, while an extended beta-hairpin is found that lines the wall of the exit tunnel in the center of the 70S ribosome.</text>
</comment>
<comment type="subunit">
    <text evidence="1">Part of the 50S ribosomal subunit.</text>
</comment>
<comment type="similarity">
    <text evidence="1">Belongs to the universal ribosomal protein uL22 family.</text>
</comment>
<keyword id="KW-1185">Reference proteome</keyword>
<keyword id="KW-0687">Ribonucleoprotein</keyword>
<keyword id="KW-0689">Ribosomal protein</keyword>
<keyword id="KW-0694">RNA-binding</keyword>
<keyword id="KW-0699">rRNA-binding</keyword>
<organism>
    <name type="scientific">Gluconacetobacter diazotrophicus (strain ATCC 49037 / DSM 5601 / CCUG 37298 / CIP 103539 / LMG 7603 / PAl5)</name>
    <dbReference type="NCBI Taxonomy" id="272568"/>
    <lineage>
        <taxon>Bacteria</taxon>
        <taxon>Pseudomonadati</taxon>
        <taxon>Pseudomonadota</taxon>
        <taxon>Alphaproteobacteria</taxon>
        <taxon>Acetobacterales</taxon>
        <taxon>Acetobacteraceae</taxon>
        <taxon>Gluconacetobacter</taxon>
    </lineage>
</organism>
<gene>
    <name evidence="1" type="primary">rplV</name>
    <name type="ordered locus">GDI3399</name>
    <name type="ordered locus">Gdia_2971</name>
</gene>
<protein>
    <recommendedName>
        <fullName evidence="1">Large ribosomal subunit protein uL22</fullName>
    </recommendedName>
    <alternativeName>
        <fullName evidence="2">50S ribosomal protein L22</fullName>
    </alternativeName>
</protein>
<reference key="1">
    <citation type="journal article" date="2009" name="BMC Genomics">
        <title>Complete genome sequence of the sugarcane nitrogen-fixing endophyte Gluconacetobacter diazotrophicus Pal5.</title>
        <authorList>
            <person name="Bertalan M."/>
            <person name="Albano R."/>
            <person name="de Padua V."/>
            <person name="Rouws L."/>
            <person name="Rojas C."/>
            <person name="Hemerly A."/>
            <person name="Teixeira K."/>
            <person name="Schwab S."/>
            <person name="Araujo J."/>
            <person name="Oliveira A."/>
            <person name="Franca L."/>
            <person name="Magalhaes V."/>
            <person name="Alqueres S."/>
            <person name="Cardoso A."/>
            <person name="Almeida W."/>
            <person name="Loureiro M.M."/>
            <person name="Nogueira E."/>
            <person name="Cidade D."/>
            <person name="Oliveira D."/>
            <person name="Simao T."/>
            <person name="Macedo J."/>
            <person name="Valadao A."/>
            <person name="Dreschsel M."/>
            <person name="Freitas F."/>
            <person name="Vidal M."/>
            <person name="Guedes H."/>
            <person name="Rodrigues E."/>
            <person name="Meneses C."/>
            <person name="Brioso P."/>
            <person name="Pozzer L."/>
            <person name="Figueiredo D."/>
            <person name="Montano H."/>
            <person name="Junior J."/>
            <person name="de Souza Filho G."/>
            <person name="Martin Quintana Flores V."/>
            <person name="Ferreira B."/>
            <person name="Branco A."/>
            <person name="Gonzalez P."/>
            <person name="Guillobel H."/>
            <person name="Lemos M."/>
            <person name="Seibel L."/>
            <person name="Macedo J."/>
            <person name="Alves-Ferreira M."/>
            <person name="Sachetto-Martins G."/>
            <person name="Coelho A."/>
            <person name="Santos E."/>
            <person name="Amaral G."/>
            <person name="Neves A."/>
            <person name="Pacheco A.B."/>
            <person name="Carvalho D."/>
            <person name="Lery L."/>
            <person name="Bisch P."/>
            <person name="Rossle S.C."/>
            <person name="Urmenyi T."/>
            <person name="Rael Pereira A."/>
            <person name="Silva R."/>
            <person name="Rondinelli E."/>
            <person name="von Kruger W."/>
            <person name="Martins O."/>
            <person name="Baldani J.I."/>
            <person name="Ferreira P.C."/>
        </authorList>
    </citation>
    <scope>NUCLEOTIDE SEQUENCE [LARGE SCALE GENOMIC DNA]</scope>
    <source>
        <strain>ATCC 49037 / DSM 5601 / CCUG 37298 / CIP 103539 / LMG 7603 / PAl5</strain>
    </source>
</reference>
<reference key="2">
    <citation type="journal article" date="2010" name="Stand. Genomic Sci.">
        <title>Two genome sequences of the same bacterial strain, Gluconacetobacter diazotrophicus PAl 5, suggest a new standard in genome sequence submission.</title>
        <authorList>
            <person name="Giongo A."/>
            <person name="Tyler H.L."/>
            <person name="Zipperer U.N."/>
            <person name="Triplett E.W."/>
        </authorList>
    </citation>
    <scope>NUCLEOTIDE SEQUENCE [LARGE SCALE GENOMIC DNA]</scope>
    <source>
        <strain>ATCC 49037 / DSM 5601 / CCUG 37298 / CIP 103539 / LMG 7603 / PAl5</strain>
    </source>
</reference>